<keyword id="KW-0328">Glycosyltransferase</keyword>
<keyword id="KW-1185">Reference proteome</keyword>
<keyword id="KW-0808">Transferase</keyword>
<reference key="1">
    <citation type="journal article" date="2002" name="Proc. Natl. Acad. Sci. U.S.A.">
        <title>Extensive mosaic structure revealed by the complete genome sequence of uropathogenic Escherichia coli.</title>
        <authorList>
            <person name="Welch R.A."/>
            <person name="Burland V."/>
            <person name="Plunkett G. III"/>
            <person name="Redford P."/>
            <person name="Roesch P."/>
            <person name="Rasko D."/>
            <person name="Buckles E.L."/>
            <person name="Liou S.-R."/>
            <person name="Boutin A."/>
            <person name="Hackett J."/>
            <person name="Stroud D."/>
            <person name="Mayhew G.F."/>
            <person name="Rose D.J."/>
            <person name="Zhou S."/>
            <person name="Schwartz D.C."/>
            <person name="Perna N.T."/>
            <person name="Mobley H.L.T."/>
            <person name="Donnenberg M.S."/>
            <person name="Blattner F.R."/>
        </authorList>
    </citation>
    <scope>NUCLEOTIDE SEQUENCE [LARGE SCALE GENOMIC DNA]</scope>
    <source>
        <strain>CFT073 / ATCC 700928 / UPEC</strain>
    </source>
</reference>
<dbReference type="EC" id="2.4.2.4" evidence="1"/>
<dbReference type="EMBL" id="AE014075">
    <property type="protein sequence ID" value="AAN83886.1"/>
    <property type="status" value="ALT_INIT"/>
    <property type="molecule type" value="Genomic_DNA"/>
</dbReference>
<dbReference type="RefSeq" id="WP_000477811.1">
    <property type="nucleotide sequence ID" value="NZ_CP051263.1"/>
</dbReference>
<dbReference type="SMR" id="Q8FA52"/>
<dbReference type="STRING" id="199310.c5466"/>
<dbReference type="GeneID" id="93777462"/>
<dbReference type="KEGG" id="ecc:c5466"/>
<dbReference type="eggNOG" id="COG0213">
    <property type="taxonomic scope" value="Bacteria"/>
</dbReference>
<dbReference type="HOGENOM" id="CLU_025040_0_1_6"/>
<dbReference type="UniPathway" id="UPA00578">
    <property type="reaction ID" value="UER00638"/>
</dbReference>
<dbReference type="Proteomes" id="UP000001410">
    <property type="component" value="Chromosome"/>
</dbReference>
<dbReference type="GO" id="GO:0005829">
    <property type="term" value="C:cytosol"/>
    <property type="evidence" value="ECO:0007669"/>
    <property type="project" value="TreeGrafter"/>
</dbReference>
<dbReference type="GO" id="GO:0004645">
    <property type="term" value="F:1,4-alpha-oligoglucan phosphorylase activity"/>
    <property type="evidence" value="ECO:0007669"/>
    <property type="project" value="InterPro"/>
</dbReference>
<dbReference type="GO" id="GO:0009032">
    <property type="term" value="F:thymidine phosphorylase activity"/>
    <property type="evidence" value="ECO:0007669"/>
    <property type="project" value="UniProtKB-UniRule"/>
</dbReference>
<dbReference type="GO" id="GO:0006206">
    <property type="term" value="P:pyrimidine nucleobase metabolic process"/>
    <property type="evidence" value="ECO:0007669"/>
    <property type="project" value="InterPro"/>
</dbReference>
<dbReference type="GO" id="GO:0046104">
    <property type="term" value="P:thymidine metabolic process"/>
    <property type="evidence" value="ECO:0007669"/>
    <property type="project" value="UniProtKB-UniRule"/>
</dbReference>
<dbReference type="FunFam" id="3.40.1030.10:FF:000001">
    <property type="entry name" value="Thymidine phosphorylase"/>
    <property type="match status" value="1"/>
</dbReference>
<dbReference type="FunFam" id="3.90.1170.30:FF:000001">
    <property type="entry name" value="Thymidine phosphorylase"/>
    <property type="match status" value="1"/>
</dbReference>
<dbReference type="Gene3D" id="3.40.1030.10">
    <property type="entry name" value="Nucleoside phosphorylase/phosphoribosyltransferase catalytic domain"/>
    <property type="match status" value="1"/>
</dbReference>
<dbReference type="Gene3D" id="3.90.1170.30">
    <property type="entry name" value="Pyrimidine nucleoside phosphorylase-like, C-terminal domain"/>
    <property type="match status" value="1"/>
</dbReference>
<dbReference type="Gene3D" id="1.20.970.10">
    <property type="entry name" value="Transferase, Pyrimidine Nucleoside Phosphorylase, Chain C"/>
    <property type="match status" value="1"/>
</dbReference>
<dbReference type="HAMAP" id="MF_01628">
    <property type="entry name" value="Thymid_phosp"/>
    <property type="match status" value="1"/>
</dbReference>
<dbReference type="InterPro" id="IPR000312">
    <property type="entry name" value="Glycosyl_Trfase_fam3"/>
</dbReference>
<dbReference type="InterPro" id="IPR017459">
    <property type="entry name" value="Glycosyl_Trfase_fam3_N_dom"/>
</dbReference>
<dbReference type="InterPro" id="IPR036320">
    <property type="entry name" value="Glycosyl_Trfase_fam3_N_dom_sf"/>
</dbReference>
<dbReference type="InterPro" id="IPR035902">
    <property type="entry name" value="Nuc_phospho_transferase"/>
</dbReference>
<dbReference type="InterPro" id="IPR036566">
    <property type="entry name" value="PYNP-like_C_sf"/>
</dbReference>
<dbReference type="InterPro" id="IPR013102">
    <property type="entry name" value="PYNP_C"/>
</dbReference>
<dbReference type="InterPro" id="IPR018090">
    <property type="entry name" value="Pyrmidine_PPas_bac/euk"/>
</dbReference>
<dbReference type="InterPro" id="IPR017872">
    <property type="entry name" value="Pyrmidine_PPase_CS"/>
</dbReference>
<dbReference type="InterPro" id="IPR000053">
    <property type="entry name" value="Thymidine/pyrmidine_PPase"/>
</dbReference>
<dbReference type="InterPro" id="IPR013465">
    <property type="entry name" value="Thymidine_Pase"/>
</dbReference>
<dbReference type="NCBIfam" id="NF004490">
    <property type="entry name" value="PRK05820.1"/>
    <property type="match status" value="1"/>
</dbReference>
<dbReference type="NCBIfam" id="TIGR02643">
    <property type="entry name" value="T_phosphoryl"/>
    <property type="match status" value="1"/>
</dbReference>
<dbReference type="NCBIfam" id="TIGR02644">
    <property type="entry name" value="Y_phosphoryl"/>
    <property type="match status" value="1"/>
</dbReference>
<dbReference type="PANTHER" id="PTHR10515">
    <property type="entry name" value="THYMIDINE PHOSPHORYLASE"/>
    <property type="match status" value="1"/>
</dbReference>
<dbReference type="PANTHER" id="PTHR10515:SF0">
    <property type="entry name" value="THYMIDINE PHOSPHORYLASE"/>
    <property type="match status" value="1"/>
</dbReference>
<dbReference type="Pfam" id="PF02885">
    <property type="entry name" value="Glycos_trans_3N"/>
    <property type="match status" value="1"/>
</dbReference>
<dbReference type="Pfam" id="PF00591">
    <property type="entry name" value="Glycos_transf_3"/>
    <property type="match status" value="1"/>
</dbReference>
<dbReference type="Pfam" id="PF07831">
    <property type="entry name" value="PYNP_C"/>
    <property type="match status" value="1"/>
</dbReference>
<dbReference type="PIRSF" id="PIRSF000478">
    <property type="entry name" value="TP_PyNP"/>
    <property type="match status" value="1"/>
</dbReference>
<dbReference type="SMART" id="SM00941">
    <property type="entry name" value="PYNP_C"/>
    <property type="match status" value="1"/>
</dbReference>
<dbReference type="SUPFAM" id="SSF52418">
    <property type="entry name" value="Nucleoside phosphorylase/phosphoribosyltransferase catalytic domain"/>
    <property type="match status" value="1"/>
</dbReference>
<dbReference type="SUPFAM" id="SSF47648">
    <property type="entry name" value="Nucleoside phosphorylase/phosphoribosyltransferase N-terminal domain"/>
    <property type="match status" value="1"/>
</dbReference>
<dbReference type="SUPFAM" id="SSF54680">
    <property type="entry name" value="Pyrimidine nucleoside phosphorylase C-terminal domain"/>
    <property type="match status" value="1"/>
</dbReference>
<dbReference type="PROSITE" id="PS00647">
    <property type="entry name" value="THYMID_PHOSPHORYLASE"/>
    <property type="match status" value="1"/>
</dbReference>
<evidence type="ECO:0000255" key="1">
    <source>
        <dbReference type="HAMAP-Rule" id="MF_01628"/>
    </source>
</evidence>
<evidence type="ECO:0000305" key="2"/>
<proteinExistence type="inferred from homology"/>
<comment type="function">
    <text evidence="1">The enzymes which catalyze the reversible phosphorolysis of pyrimidine nucleosides are involved in the degradation of these compounds and in their utilization as carbon and energy sources, or in the rescue of pyrimidine bases for nucleotide synthesis.</text>
</comment>
<comment type="catalytic activity">
    <reaction evidence="1">
        <text>thymidine + phosphate = 2-deoxy-alpha-D-ribose 1-phosphate + thymine</text>
        <dbReference type="Rhea" id="RHEA:16037"/>
        <dbReference type="ChEBI" id="CHEBI:17748"/>
        <dbReference type="ChEBI" id="CHEBI:17821"/>
        <dbReference type="ChEBI" id="CHEBI:43474"/>
        <dbReference type="ChEBI" id="CHEBI:57259"/>
        <dbReference type="EC" id="2.4.2.4"/>
    </reaction>
</comment>
<comment type="pathway">
    <text evidence="1">Pyrimidine metabolism; dTMP biosynthesis via salvage pathway; dTMP from thymine: step 1/2.</text>
</comment>
<comment type="subunit">
    <text evidence="1">Homodimer.</text>
</comment>
<comment type="similarity">
    <text evidence="1">Belongs to the thymidine/pyrimidine-nucleoside phosphorylase family.</text>
</comment>
<comment type="sequence caution" evidence="2">
    <conflict type="erroneous initiation">
        <sequence resource="EMBL-CDS" id="AAN83886"/>
    </conflict>
</comment>
<sequence length="440" mass="47180">MFLAQEIIRKKRDGHALSDEEIRFFINGIRDNTISEGQIAALAMTIFFHDMTMPERVSLTMAMRDSGTVLDWKSLHLNGPIVDKHSTGGVGDVTSLMLGPMVAACGGYIPMISGRGLGHTGGTLDKLESIPGFDIFPDDNRFREIIKDVGVAIIGQTSSLAPADKRFYATRDITATVDSIPLITASILAKKLAEGLDALVMDVKVGSGAFMPTYELSEALAEAIVGVANGAGVRTTALLTDMNQVLASSAGNAVEVREAVQFLTGEYRNPRLFDVTMALCVEMLISGKLAKDDAEARAKLQAVLDNGKAAEVFGRMVAAQKGPTDFVENYAKYLPTAMLTKAVYADTEGFVSEMDTRALGMAVVAMGGGRRQASDTIDYSVGFTDMARLGDQVDGQRPLAVIHAKDENSWQEAAKAVKAAIKLADKAPESTPTVYRRISE</sequence>
<gene>
    <name evidence="1" type="primary">deoA</name>
    <name type="ordered locus">c5466</name>
</gene>
<feature type="chain" id="PRO_0000059056" description="Thymidine phosphorylase">
    <location>
        <begin position="1"/>
        <end position="440"/>
    </location>
</feature>
<organism>
    <name type="scientific">Escherichia coli O6:H1 (strain CFT073 / ATCC 700928 / UPEC)</name>
    <dbReference type="NCBI Taxonomy" id="199310"/>
    <lineage>
        <taxon>Bacteria</taxon>
        <taxon>Pseudomonadati</taxon>
        <taxon>Pseudomonadota</taxon>
        <taxon>Gammaproteobacteria</taxon>
        <taxon>Enterobacterales</taxon>
        <taxon>Enterobacteriaceae</taxon>
        <taxon>Escherichia</taxon>
    </lineage>
</organism>
<protein>
    <recommendedName>
        <fullName evidence="1">Thymidine phosphorylase</fullName>
        <ecNumber evidence="1">2.4.2.4</ecNumber>
    </recommendedName>
    <alternativeName>
        <fullName evidence="1">TdRPase</fullName>
    </alternativeName>
</protein>
<name>TYPH_ECOL6</name>
<accession>Q8FA52</accession>